<name>RHGB_ASPOR</name>
<accession>Q2TWN8</accession>
<evidence type="ECO:0000250" key="1"/>
<evidence type="ECO:0000255" key="2"/>
<evidence type="ECO:0000256" key="3">
    <source>
        <dbReference type="SAM" id="MobiDB-lite"/>
    </source>
</evidence>
<evidence type="ECO:0000305" key="4"/>
<gene>
    <name type="primary">rhgB</name>
    <name type="ORF">AO090010000484</name>
</gene>
<keyword id="KW-0119">Carbohydrate metabolism</keyword>
<keyword id="KW-0961">Cell wall biogenesis/degradation</keyword>
<keyword id="KW-1015">Disulfide bond</keyword>
<keyword id="KW-0325">Glycoprotein</keyword>
<keyword id="KW-0326">Glycosidase</keyword>
<keyword id="KW-0378">Hydrolase</keyword>
<keyword id="KW-0624">Polysaccharide degradation</keyword>
<keyword id="KW-1185">Reference proteome</keyword>
<keyword id="KW-0964">Secreted</keyword>
<keyword id="KW-0732">Signal</keyword>
<sequence>MRINTLSLFSLVSLVPTLALASLSGSVGPLTSASTKAATKTCNVLDYGAKADKTTDLGPPLASAFADCKSGGLVYVPSGDYALSTWAKLSGGKAWALQIDGTIYRTGTDGGNMIFIEHSSDFELFSSTSSGAMQGLGYEYHKDNKWSGPRLLRLYDVTDFSVHDFILVDAPAFHFSLDTCTNGEVYNMAIRGGNHGGLDGVDVWSTNVWIHDIEVTNKDECVTVKSPSKNILVENIYCNWSGGCGMGSLGKDTDISDITYRNIYTWNSNNMMFIKSNGGSGSATNLLFENFIGHGNAYSFDIDSYWASMSSQGGNGVELSNITLRNWKGTEENGASRGPIKIVCPDGAPCYDITIEDFAMWTEDSSRQRQWYSCRNAYGTGFCLKSGSNHVAYEATTTTVSSAPSGYSAATMAADLKTDFGITASIPIPTIPTSFYPGATPYSALMANKGSTAKVRAVVAPSKPTTVAAATSTPAEQQTSTSTPAPAVEQPSQQSPGQSAGEVGGCPFGNGRSVPTGPPRAGHRHHQRHGHH</sequence>
<reference key="1">
    <citation type="journal article" date="2005" name="Nature">
        <title>Genome sequencing and analysis of Aspergillus oryzae.</title>
        <authorList>
            <person name="Machida M."/>
            <person name="Asai K."/>
            <person name="Sano M."/>
            <person name="Tanaka T."/>
            <person name="Kumagai T."/>
            <person name="Terai G."/>
            <person name="Kusumoto K."/>
            <person name="Arima T."/>
            <person name="Akita O."/>
            <person name="Kashiwagi Y."/>
            <person name="Abe K."/>
            <person name="Gomi K."/>
            <person name="Horiuchi H."/>
            <person name="Kitamoto K."/>
            <person name="Kobayashi T."/>
            <person name="Takeuchi M."/>
            <person name="Denning D.W."/>
            <person name="Galagan J.E."/>
            <person name="Nierman W.C."/>
            <person name="Yu J."/>
            <person name="Archer D.B."/>
            <person name="Bennett J.W."/>
            <person name="Bhatnagar D."/>
            <person name="Cleveland T.E."/>
            <person name="Fedorova N.D."/>
            <person name="Gotoh O."/>
            <person name="Horikawa H."/>
            <person name="Hosoyama A."/>
            <person name="Ichinomiya M."/>
            <person name="Igarashi R."/>
            <person name="Iwashita K."/>
            <person name="Juvvadi P.R."/>
            <person name="Kato M."/>
            <person name="Kato Y."/>
            <person name="Kin T."/>
            <person name="Kokubun A."/>
            <person name="Maeda H."/>
            <person name="Maeyama N."/>
            <person name="Maruyama J."/>
            <person name="Nagasaki H."/>
            <person name="Nakajima T."/>
            <person name="Oda K."/>
            <person name="Okada K."/>
            <person name="Paulsen I."/>
            <person name="Sakamoto K."/>
            <person name="Sawano T."/>
            <person name="Takahashi M."/>
            <person name="Takase K."/>
            <person name="Terabayashi Y."/>
            <person name="Wortman J.R."/>
            <person name="Yamada O."/>
            <person name="Yamagata Y."/>
            <person name="Anazawa H."/>
            <person name="Hata Y."/>
            <person name="Koide Y."/>
            <person name="Komori T."/>
            <person name="Koyama Y."/>
            <person name="Minetoki T."/>
            <person name="Suharnan S."/>
            <person name="Tanaka A."/>
            <person name="Isono K."/>
            <person name="Kuhara S."/>
            <person name="Ogasawara N."/>
            <person name="Kikuchi H."/>
        </authorList>
    </citation>
    <scope>NUCLEOTIDE SEQUENCE [LARGE SCALE GENOMIC DNA]</scope>
    <source>
        <strain>ATCC 42149 / RIB 40</strain>
    </source>
</reference>
<organism>
    <name type="scientific">Aspergillus oryzae (strain ATCC 42149 / RIB 40)</name>
    <name type="common">Yellow koji mold</name>
    <dbReference type="NCBI Taxonomy" id="510516"/>
    <lineage>
        <taxon>Eukaryota</taxon>
        <taxon>Fungi</taxon>
        <taxon>Dikarya</taxon>
        <taxon>Ascomycota</taxon>
        <taxon>Pezizomycotina</taxon>
        <taxon>Eurotiomycetes</taxon>
        <taxon>Eurotiomycetidae</taxon>
        <taxon>Eurotiales</taxon>
        <taxon>Aspergillaceae</taxon>
        <taxon>Aspergillus</taxon>
        <taxon>Aspergillus subgen. Circumdati</taxon>
    </lineage>
</organism>
<proteinExistence type="inferred from homology"/>
<feature type="signal peptide" evidence="2">
    <location>
        <begin position="1"/>
        <end position="21"/>
    </location>
</feature>
<feature type="chain" id="PRO_0000394389" description="Probable rhamnogalacturonase B">
    <location>
        <begin position="22"/>
        <end position="532"/>
    </location>
</feature>
<feature type="region of interest" description="Disordered" evidence="3">
    <location>
        <begin position="466"/>
        <end position="532"/>
    </location>
</feature>
<feature type="compositionally biased region" description="Low complexity" evidence="3">
    <location>
        <begin position="466"/>
        <end position="475"/>
    </location>
</feature>
<feature type="compositionally biased region" description="Low complexity" evidence="3">
    <location>
        <begin position="490"/>
        <end position="499"/>
    </location>
</feature>
<feature type="compositionally biased region" description="Basic residues" evidence="3">
    <location>
        <begin position="521"/>
        <end position="532"/>
    </location>
</feature>
<feature type="active site" description="Proton donor" evidence="1">
    <location>
        <position position="219"/>
    </location>
</feature>
<feature type="active site" evidence="1">
    <location>
        <position position="294"/>
    </location>
</feature>
<feature type="glycosylation site" description="N-linked (GlcNAc...) asparagine" evidence="2">
    <location>
        <position position="239"/>
    </location>
</feature>
<feature type="glycosylation site" description="N-linked (GlcNAc...) asparagine" evidence="2">
    <location>
        <position position="321"/>
    </location>
</feature>
<feature type="disulfide bond" evidence="1">
    <location>
        <begin position="42"/>
        <end position="68"/>
    </location>
</feature>
<feature type="disulfide bond" evidence="1">
    <location>
        <begin position="221"/>
        <end position="238"/>
    </location>
</feature>
<feature type="disulfide bond" evidence="1">
    <location>
        <begin position="344"/>
        <end position="350"/>
    </location>
</feature>
<feature type="disulfide bond" evidence="1">
    <location>
        <begin position="374"/>
        <end position="383"/>
    </location>
</feature>
<protein>
    <recommendedName>
        <fullName>Probable rhamnogalacturonase B</fullName>
        <shortName>RGase B</shortName>
        <shortName>RHG B</shortName>
        <ecNumber>3.2.1.171</ecNumber>
    </recommendedName>
</protein>
<comment type="function">
    <text evidence="1">Pectinolytic enzymes consist of four classes of enzymes: pectine lyase, polygalacturonase, pectin methylesterase and rhamnogalacturonase. Hydrolyzes alpha-D-galacturonopyranosyl-(1,2)-alpha-L-rhamnopyranosyl linkages in the backbone of the hairy regions of pectins (By similarity).</text>
</comment>
<comment type="catalytic activity">
    <reaction>
        <text>Endohydrolysis of alpha-D-GalA-(1-&gt;2)-alpha-L-Rha glycosidic bond in the rhamnogalacturonan I backbone with initial inversion of anomeric configuration releasing oligosaccharides with beta-D-GalA at the reducing end.</text>
        <dbReference type="EC" id="3.2.1.171"/>
    </reaction>
</comment>
<comment type="subcellular location">
    <subcellularLocation>
        <location evidence="1">Secreted</location>
    </subcellularLocation>
</comment>
<comment type="similarity">
    <text evidence="4">Belongs to the glycosyl hydrolase 28 family.</text>
</comment>
<dbReference type="EC" id="3.2.1.171"/>
<dbReference type="EMBL" id="BA000056">
    <property type="protein sequence ID" value="BAE66335.1"/>
    <property type="molecule type" value="Genomic_DNA"/>
</dbReference>
<dbReference type="RefSeq" id="XP_001827468.1">
    <property type="nucleotide sequence ID" value="XM_001827416.1"/>
</dbReference>
<dbReference type="SMR" id="Q2TWN8"/>
<dbReference type="STRING" id="510516.Q2TWN8"/>
<dbReference type="CAZy" id="GH28">
    <property type="family name" value="Glycoside Hydrolase Family 28"/>
</dbReference>
<dbReference type="GlyCosmos" id="Q2TWN8">
    <property type="glycosylation" value="2 sites, No reported glycans"/>
</dbReference>
<dbReference type="EnsemblFungi" id="BAE66335">
    <property type="protein sequence ID" value="BAE66335"/>
    <property type="gene ID" value="AO090010000484"/>
</dbReference>
<dbReference type="GeneID" id="5999602"/>
<dbReference type="KEGG" id="aor:AO090010000484"/>
<dbReference type="VEuPathDB" id="FungiDB:AO090010000484"/>
<dbReference type="HOGENOM" id="CLU_016031_7_2_1"/>
<dbReference type="OMA" id="NMMLIKS"/>
<dbReference type="OrthoDB" id="108300at5052"/>
<dbReference type="Proteomes" id="UP000006564">
    <property type="component" value="Chromosome 8"/>
</dbReference>
<dbReference type="GO" id="GO:0005576">
    <property type="term" value="C:extracellular region"/>
    <property type="evidence" value="ECO:0007669"/>
    <property type="project" value="UniProtKB-SubCell"/>
</dbReference>
<dbReference type="GO" id="GO:0004650">
    <property type="term" value="F:polygalacturonase activity"/>
    <property type="evidence" value="ECO:0007669"/>
    <property type="project" value="InterPro"/>
</dbReference>
<dbReference type="GO" id="GO:0046576">
    <property type="term" value="F:rhamnogalacturonan alpha-L-rhamnopyranosyl-(1-&gt;4)-alpha-D-galactopyranosyluronide lyase activity"/>
    <property type="evidence" value="ECO:0000250"/>
    <property type="project" value="UniProtKB"/>
</dbReference>
<dbReference type="GO" id="GO:0071555">
    <property type="term" value="P:cell wall organization"/>
    <property type="evidence" value="ECO:0007669"/>
    <property type="project" value="UniProtKB-KW"/>
</dbReference>
<dbReference type="GO" id="GO:0045490">
    <property type="term" value="P:pectin catabolic process"/>
    <property type="evidence" value="ECO:0000250"/>
    <property type="project" value="UniProtKB"/>
</dbReference>
<dbReference type="FunFam" id="2.160.20.10:FF:000025">
    <property type="entry name" value="Probable rhamnogalacturonase B"/>
    <property type="match status" value="1"/>
</dbReference>
<dbReference type="Gene3D" id="2.160.20.10">
    <property type="entry name" value="Single-stranded right-handed beta-helix, Pectin lyase-like"/>
    <property type="match status" value="1"/>
</dbReference>
<dbReference type="InterPro" id="IPR000743">
    <property type="entry name" value="Glyco_hydro_28"/>
</dbReference>
<dbReference type="InterPro" id="IPR012334">
    <property type="entry name" value="Pectin_lyas_fold"/>
</dbReference>
<dbReference type="InterPro" id="IPR011050">
    <property type="entry name" value="Pectin_lyase_fold/virulence"/>
</dbReference>
<dbReference type="PANTHER" id="PTHR31736">
    <property type="match status" value="1"/>
</dbReference>
<dbReference type="PANTHER" id="PTHR31736:SF19">
    <property type="entry name" value="PECTIN LYASE SUPERFAMILY PROTEIN-RELATED"/>
    <property type="match status" value="1"/>
</dbReference>
<dbReference type="Pfam" id="PF00295">
    <property type="entry name" value="Glyco_hydro_28"/>
    <property type="match status" value="1"/>
</dbReference>
<dbReference type="SUPFAM" id="SSF51126">
    <property type="entry name" value="Pectin lyase-like"/>
    <property type="match status" value="1"/>
</dbReference>